<gene>
    <name evidence="1" type="primary">clpS</name>
    <name type="ordered locus">SARI_02017</name>
</gene>
<name>CLPS_SALAR</name>
<dbReference type="EMBL" id="CP000880">
    <property type="protein sequence ID" value="ABX21896.1"/>
    <property type="molecule type" value="Genomic_DNA"/>
</dbReference>
<dbReference type="SMR" id="A9MI06"/>
<dbReference type="STRING" id="41514.SARI_02017"/>
<dbReference type="KEGG" id="ses:SARI_02017"/>
<dbReference type="HOGENOM" id="CLU_134358_2_1_6"/>
<dbReference type="Proteomes" id="UP000002084">
    <property type="component" value="Chromosome"/>
</dbReference>
<dbReference type="GO" id="GO:0030163">
    <property type="term" value="P:protein catabolic process"/>
    <property type="evidence" value="ECO:0007669"/>
    <property type="project" value="InterPro"/>
</dbReference>
<dbReference type="GO" id="GO:0006508">
    <property type="term" value="P:proteolysis"/>
    <property type="evidence" value="ECO:0007669"/>
    <property type="project" value="UniProtKB-UniRule"/>
</dbReference>
<dbReference type="FunFam" id="3.30.1390.10:FF:000002">
    <property type="entry name" value="ATP-dependent Clp protease adapter protein ClpS"/>
    <property type="match status" value="1"/>
</dbReference>
<dbReference type="Gene3D" id="3.30.1390.10">
    <property type="match status" value="1"/>
</dbReference>
<dbReference type="HAMAP" id="MF_00302">
    <property type="entry name" value="ClpS"/>
    <property type="match status" value="1"/>
</dbReference>
<dbReference type="InterPro" id="IPR022935">
    <property type="entry name" value="ClpS"/>
</dbReference>
<dbReference type="InterPro" id="IPR003769">
    <property type="entry name" value="ClpS_core"/>
</dbReference>
<dbReference type="InterPro" id="IPR014719">
    <property type="entry name" value="Ribosomal_bL12_C/ClpS-like"/>
</dbReference>
<dbReference type="NCBIfam" id="NF000670">
    <property type="entry name" value="PRK00033.1-3"/>
    <property type="match status" value="1"/>
</dbReference>
<dbReference type="NCBIfam" id="NF000672">
    <property type="entry name" value="PRK00033.1-5"/>
    <property type="match status" value="1"/>
</dbReference>
<dbReference type="PANTHER" id="PTHR33473:SF19">
    <property type="entry name" value="ATP-DEPENDENT CLP PROTEASE ADAPTER PROTEIN CLPS"/>
    <property type="match status" value="1"/>
</dbReference>
<dbReference type="PANTHER" id="PTHR33473">
    <property type="entry name" value="ATP-DEPENDENT CLP PROTEASE ADAPTER PROTEIN CLPS1, CHLOROPLASTIC"/>
    <property type="match status" value="1"/>
</dbReference>
<dbReference type="Pfam" id="PF02617">
    <property type="entry name" value="ClpS"/>
    <property type="match status" value="1"/>
</dbReference>
<dbReference type="SUPFAM" id="SSF54736">
    <property type="entry name" value="ClpS-like"/>
    <property type="match status" value="1"/>
</dbReference>
<organism>
    <name type="scientific">Salmonella arizonae (strain ATCC BAA-731 / CDC346-86 / RSK2980)</name>
    <dbReference type="NCBI Taxonomy" id="41514"/>
    <lineage>
        <taxon>Bacteria</taxon>
        <taxon>Pseudomonadati</taxon>
        <taxon>Pseudomonadota</taxon>
        <taxon>Gammaproteobacteria</taxon>
        <taxon>Enterobacterales</taxon>
        <taxon>Enterobacteriaceae</taxon>
        <taxon>Salmonella</taxon>
    </lineage>
</organism>
<proteinExistence type="inferred from homology"/>
<protein>
    <recommendedName>
        <fullName evidence="1">ATP-dependent Clp protease adapter protein ClpS</fullName>
    </recommendedName>
</protein>
<comment type="function">
    <text evidence="1">Involved in the modulation of the specificity of the ClpAP-mediated ATP-dependent protein degradation.</text>
</comment>
<comment type="subunit">
    <text evidence="1">Binds to the N-terminal domain of the chaperone ClpA.</text>
</comment>
<comment type="similarity">
    <text evidence="1">Belongs to the ClpS family.</text>
</comment>
<sequence>MGKTNDWLDFDQLVEDDLRDALKPPSMYKVILVNDDYTPMEFVIDVLQKFFSYDVERATQLMLAVHYQGKAICGVFTAEVAETKVEMVNQYARENEHPLLCTLEKA</sequence>
<evidence type="ECO:0000255" key="1">
    <source>
        <dbReference type="HAMAP-Rule" id="MF_00302"/>
    </source>
</evidence>
<keyword id="KW-1185">Reference proteome</keyword>
<accession>A9MI06</accession>
<feature type="chain" id="PRO_1000079025" description="ATP-dependent Clp protease adapter protein ClpS">
    <location>
        <begin position="1"/>
        <end position="106"/>
    </location>
</feature>
<reference key="1">
    <citation type="submission" date="2007-11" db="EMBL/GenBank/DDBJ databases">
        <authorList>
            <consortium name="The Salmonella enterica serovar Arizonae Genome Sequencing Project"/>
            <person name="McClelland M."/>
            <person name="Sanderson E.K."/>
            <person name="Porwollik S."/>
            <person name="Spieth J."/>
            <person name="Clifton W.S."/>
            <person name="Fulton R."/>
            <person name="Chunyan W."/>
            <person name="Wollam A."/>
            <person name="Shah N."/>
            <person name="Pepin K."/>
            <person name="Bhonagiri V."/>
            <person name="Nash W."/>
            <person name="Johnson M."/>
            <person name="Thiruvilangam P."/>
            <person name="Wilson R."/>
        </authorList>
    </citation>
    <scope>NUCLEOTIDE SEQUENCE [LARGE SCALE GENOMIC DNA]</scope>
    <source>
        <strain>ATCC BAA-731 / CDC346-86 / RSK2980</strain>
    </source>
</reference>